<dbReference type="EMBL" id="AY543070">
    <property type="protein sequence ID" value="AAQ92754.1"/>
    <property type="molecule type" value="Genomic_DNA"/>
</dbReference>
<dbReference type="EMBL" id="AY692264">
    <property type="protein sequence ID" value="AAU05273.1"/>
    <property type="molecule type" value="Genomic_DNA"/>
</dbReference>
<dbReference type="EMBL" id="AY587007">
    <property type="protein sequence ID" value="AAX12064.1"/>
    <property type="molecule type" value="Genomic_DNA"/>
</dbReference>
<dbReference type="RefSeq" id="YP_006966.1">
    <property type="nucleotide sequence ID" value="NC_005859.1"/>
</dbReference>
<dbReference type="PDB" id="7ZHJ">
    <property type="method" value="EM"/>
    <property type="resolution" value="3.53 A"/>
    <property type="chains" value="b/c/d=1-949"/>
</dbReference>
<dbReference type="PDB" id="7ZN2">
    <property type="method" value="EM"/>
    <property type="resolution" value="4.29 A"/>
    <property type="chains" value="b/c/d=1-949"/>
</dbReference>
<dbReference type="PDB" id="7ZN4">
    <property type="method" value="EM"/>
    <property type="resolution" value="4.32 A"/>
    <property type="chains" value="b/c/d=1-949"/>
</dbReference>
<dbReference type="PDB" id="7ZQB">
    <property type="method" value="EM"/>
    <property type="resolution" value="3.88 A"/>
    <property type="chains" value="b/c/d=1-949"/>
</dbReference>
<dbReference type="PDB" id="7ZQP">
    <property type="method" value="EM"/>
    <property type="resolution" value="3.60 A"/>
    <property type="chains" value="b/c/d=1-949"/>
</dbReference>
<dbReference type="PDB" id="9IOZ">
    <property type="method" value="EM"/>
    <property type="resolution" value="3.90 A"/>
    <property type="chains" value="J/K/L=1-949"/>
</dbReference>
<dbReference type="PDBsum" id="7ZHJ"/>
<dbReference type="PDBsum" id="7ZN2"/>
<dbReference type="PDBsum" id="7ZN4"/>
<dbReference type="PDBsum" id="7ZQB"/>
<dbReference type="PDBsum" id="7ZQP"/>
<dbReference type="PDBsum" id="9IOZ"/>
<dbReference type="EMDB" id="EMD-14733"/>
<dbReference type="EMDB" id="EMD-14799"/>
<dbReference type="EMDB" id="EMD-14800"/>
<dbReference type="EMDB" id="EMD-14869"/>
<dbReference type="EMDB" id="EMD-14873"/>
<dbReference type="EMDB" id="EMD-60750"/>
<dbReference type="SMR" id="Q6QGE9"/>
<dbReference type="GeneID" id="2777627"/>
<dbReference type="KEGG" id="vg:2777627"/>
<dbReference type="Proteomes" id="UP000002107">
    <property type="component" value="Genome"/>
</dbReference>
<dbReference type="Proteomes" id="UP000002141">
    <property type="component" value="Segment"/>
</dbReference>
<dbReference type="Proteomes" id="UP000002503">
    <property type="component" value="Segment"/>
</dbReference>
<dbReference type="GO" id="GO:0098015">
    <property type="term" value="C:virus tail"/>
    <property type="evidence" value="ECO:0000314"/>
    <property type="project" value="CACAO"/>
</dbReference>
<dbReference type="GO" id="GO:0098025">
    <property type="term" value="C:virus tail, baseplate"/>
    <property type="evidence" value="ECO:0007669"/>
    <property type="project" value="UniProtKB-KW"/>
</dbReference>
<organismHost>
    <name type="scientific">Escherichia coli</name>
    <dbReference type="NCBI Taxonomy" id="562"/>
</organismHost>
<accession>Q6QGE9</accession>
<reference key="1">
    <citation type="submission" date="2004-01" db="EMBL/GenBank/DDBJ databases">
        <title>Bacteriophage T5 complete genome.</title>
        <authorList>
            <person name="Ksenzenko V.N."/>
            <person name="Kaliman A.V."/>
            <person name="Krutilina A.I."/>
            <person name="Shlyapnikov M.G."/>
        </authorList>
    </citation>
    <scope>NUCLEOTIDE SEQUENCE [LARGE SCALE GENOMIC DNA]</scope>
</reference>
<reference key="2">
    <citation type="journal article" date="2005" name="Virology">
        <title>Complete genome sequence of bacteriophage T5.</title>
        <authorList>
            <person name="Wang J."/>
            <person name="Jiang Y."/>
            <person name="Vincent M."/>
            <person name="Sun Y."/>
            <person name="Yu H."/>
            <person name="Wang J."/>
            <person name="Bao Q."/>
            <person name="Kong H."/>
            <person name="Hu S."/>
        </authorList>
    </citation>
    <scope>NUCLEOTIDE SEQUENCE [LARGE SCALE GENOMIC DNA]</scope>
    <scope>INDUCTION</scope>
    <source>
        <strain evidence="8">ATCC 11303-B5</strain>
    </source>
</reference>
<reference key="3">
    <citation type="journal article" date="2014" name="J. Virol.">
        <title>Insights into bacteriophage T5 structure from analysis of its morphogenesis genes and protein components.</title>
        <authorList>
            <person name="Zivanovic Y."/>
            <person name="Confalonieri F."/>
            <person name="Ponchon L."/>
            <person name="Lurz R."/>
            <person name="Chami M."/>
            <person name="Flayhan A."/>
            <person name="Renouard M."/>
            <person name="Huet A."/>
            <person name="Decottignies P."/>
            <person name="Davidson A.R."/>
            <person name="Breyton C."/>
            <person name="Boulanger P."/>
        </authorList>
    </citation>
    <scope>NUCLEOTIDE SEQUENCE [LARGE SCALE GENOMIC DNA]</scope>
    <scope>SUBCELLULAR LOCATION</scope>
    <source>
        <strain>St0 deletion mutant</strain>
    </source>
</reference>
<reference key="4">
    <citation type="journal article" date="2024" name="Nature">
        <title>Bacteria conjugate ubiquitin-like proteins to interfere with phage assembly.</title>
        <authorList>
            <person name="Hoer J."/>
            <person name="Wolf S.G."/>
            <person name="Sorek R."/>
        </authorList>
    </citation>
    <scope>UBIQUITINYLATION</scope>
</reference>
<reference evidence="9 10 11 12" key="5">
    <citation type="journal article" date="2023" name="Sci. Adv.">
        <title>Structural basis of bacteriophage T5 infection trigger and E. coli cell wall perforation.</title>
        <authorList>
            <person name="Linares R."/>
            <person name="Arnaud C.A."/>
            <person name="Effantin G."/>
            <person name="Darnault C."/>
            <person name="Epalle N.H."/>
            <person name="Boeri Erba E."/>
            <person name="Schoehn G."/>
            <person name="Breyton C."/>
        </authorList>
    </citation>
    <scope>STRUCTURE BY ELECTRON MICROSCOPY (3.53 ANGSTROMS)</scope>
    <scope>FUNCTION</scope>
    <scope>SUBCELLULAR LOCATION</scope>
    <scope>SUBUNIT</scope>
    <scope>INTERACTION WITH DISTAL TAIL PROTEIN PB9</scope>
    <scope>INTERACTION WITH STRAIGHT FIBER PROTEIN PB4</scope>
</reference>
<evidence type="ECO:0000269" key="1">
    <source>
    </source>
</evidence>
<evidence type="ECO:0000269" key="2">
    <source>
    </source>
</evidence>
<evidence type="ECO:0000269" key="3">
    <source>
    </source>
</evidence>
<evidence type="ECO:0000303" key="4">
    <source>
    </source>
</evidence>
<evidence type="ECO:0000305" key="5"/>
<evidence type="ECO:0000312" key="6">
    <source>
        <dbReference type="EMBL" id="AAQ92754.1"/>
    </source>
</evidence>
<evidence type="ECO:0000312" key="7">
    <source>
        <dbReference type="EMBL" id="AAU05273.1"/>
    </source>
</evidence>
<evidence type="ECO:0000312" key="8">
    <source>
        <dbReference type="EMBL" id="AAX12064.1"/>
    </source>
</evidence>
<evidence type="ECO:0007744" key="9">
    <source>
        <dbReference type="PDB" id="7ZHJ"/>
    </source>
</evidence>
<evidence type="ECO:0007744" key="10">
    <source>
        <dbReference type="PDB" id="7ZN2"/>
    </source>
</evidence>
<evidence type="ECO:0007744" key="11">
    <source>
        <dbReference type="PDB" id="7ZN4"/>
    </source>
</evidence>
<evidence type="ECO:0007744" key="12">
    <source>
        <dbReference type="PDB" id="7ZQP"/>
    </source>
</evidence>
<feature type="chain" id="PRO_0000432925" description="Baseplate hub protein pb3">
    <location>
        <begin position="1"/>
        <end position="949"/>
    </location>
</feature>
<keyword id="KW-0002">3D-structure</keyword>
<keyword id="KW-0426">Late protein</keyword>
<keyword id="KW-1185">Reference proteome</keyword>
<keyword id="KW-0832">Ubl conjugation</keyword>
<keyword id="KW-1226">Viral baseplate protein</keyword>
<keyword id="KW-1227">Viral tail protein</keyword>
<keyword id="KW-0946">Virion</keyword>
<proteinExistence type="evidence at protein level"/>
<sequence>MKKILDSAKNYLNTHDKLKTACLIALELPSSSGSAATYIYLTDYFRDVTYNGILYRSGKVKSISSHKQNRQLSIGSLSFTITGTAEDEVLKLVQNGVSFLDRGITIHQAIINEEGNILPVDPDTDGPLLFFRGRITGGGIKDNVNTSGIGTSVITWNCSNQFYDFDRVNGRYTDDASHRGLEVVNGTLQPSNGAKRPEYQEDYGFFHSNKSTTILAKYQVKEERYKLQSKKKLFGLSRSYSLKKYYETVTKEVDLDFNLAAKFIPVVYGVQKIPGIPIFADTELNNPNIVYVVYAFAEGEIDGFLDFYIGDSPMICFDETDSDTRTCFGRKKIVGDTMHRLAAGTSTSQPSVHGQEYKYNDGNGDIRIWTFHGKPDQTAAQVLVDIAKKKGFYLQNQNGNGPEYWDSRYKLLDTAYAIVRFTINENRTEIPEISAEVQGKKVKVYNSDGTIKADKTSLNGIWQLMDYLTSDRYGADITLDQFPLQKVISEAKILDIIDESYQTSWQPYWRYVGWNDPLSENRQIVQLNTILDTSESVFKNVQGILESFGGAINNLSGEYRITVEKYSTNPLRINFLDTYGDLDLSDTTGRNKFNSVQASLVDPALSWKTNSITFYNSKFKEQDKGLDKKLQLSFANITNYYTARSYADRELKKSRYSRTLSFSVPYKFIGIEPNDPIAFTYERYGWKDKFFLVDEVENTRDGKINLVLQEYGEDVFINSEQVDNSGNDIPDISNNVLPPRDFKYTPTPGGVVGAIGKNGELSWLPSLTNNVVYYSIAHSGHVNPYIVQQLENNPNERMIQEIIGEPAGLAIFELRAVDINGRRSSPVTLSVDLNSAKNLSVVSNFRVVNTASGDVTEFVGPDVKLAWDKIPEEEIIPEIYYTLEIYDSQDRMLRSVRIEDVYTYDYLLTYNKADFALLNSGALGINRKLRFRIRAEGENGEQSVGWATI</sequence>
<protein>
    <recommendedName>
        <fullName evidence="4">Baseplate hub protein pb3</fullName>
        <shortName evidence="4">BHP-pb3</shortName>
    </recommendedName>
    <alternativeName>
        <fullName evidence="4">Tail protein pb3</fullName>
    </alternativeName>
</protein>
<gene>
    <name evidence="6" type="primary">D16</name>
    <name type="ORF">ORF127</name>
    <name evidence="6" type="ORF">T5.138</name>
    <name evidence="7" type="ORF">T5p134</name>
</gene>
<organism>
    <name type="scientific">Escherichia phage T5</name>
    <name type="common">Enterobacteria phage T5</name>
    <dbReference type="NCBI Taxonomy" id="2695836"/>
    <lineage>
        <taxon>Viruses</taxon>
        <taxon>Duplodnaviria</taxon>
        <taxon>Heunggongvirae</taxon>
        <taxon>Uroviricota</taxon>
        <taxon>Caudoviricetes</taxon>
        <taxon>Demerecviridae</taxon>
        <taxon>Markadamsvirinae</taxon>
        <taxon>Tequintavirus</taxon>
        <taxon>Tequintavirus T5</taxon>
    </lineage>
</organism>
<comment type="function">
    <text evidence="2">Forms the simplified baseplate, together with the p132 collar protein, the baseplate tube protein p140 and distal tail protein pb9. Closes the tail tube and, upon infection, opens to form a channel thereby anchoring the tube to the outer membrane. These changes allow the tape measure protein pb2 to be expelled and phage DNA to be transferred to the host. Also forms the start of the central straight fiber, which is continued with the straight fiber protein pb4.</text>
</comment>
<comment type="subunit">
    <text evidence="2">Homotrimer (PubMed:36961893). Forms a pseudo-hexameric ring (PubMed:36961893). Interacts with distal tail protein pb9 and straight fiber protein pb4 (PubMed:36961893).</text>
</comment>
<comment type="subcellular location">
    <subcellularLocation>
        <location evidence="1 2">Virion</location>
    </subcellularLocation>
    <text evidence="1 2">Component of the tail (PubMed:24198424, PubMed:36961893). Located under the DTP-pb9 hexamer (PubMed:36961893).</text>
</comment>
<comment type="induction">
    <text evidence="5">Expressed in the late phase of the viral replicative cycle.</text>
</comment>
<comment type="PTM">
    <text evidence="3">Ubiquitinated by the Bil antiviral defense system when this protein is expressed in E.coli MG1655 strain expressing the Bil system.</text>
</comment>
<name>BPPB3_BPT5</name>